<evidence type="ECO:0000250" key="1"/>
<evidence type="ECO:0000250" key="2">
    <source>
        <dbReference type="UniProtKB" id="Q1ELU1"/>
    </source>
</evidence>
<evidence type="ECO:0000250" key="3">
    <source>
        <dbReference type="UniProtKB" id="Q1ELU7"/>
    </source>
</evidence>
<evidence type="ECO:0000255" key="4"/>
<evidence type="ECO:0000269" key="5">
    <source>
    </source>
</evidence>
<evidence type="ECO:0000303" key="6">
    <source>
    </source>
</evidence>
<evidence type="ECO:0000303" key="7">
    <source>
    </source>
</evidence>
<evidence type="ECO:0000305" key="8"/>
<evidence type="ECO:0000305" key="9">
    <source>
    </source>
</evidence>
<sequence>MKYFVIALALAVALVCIAESTAYEVNEELENELDDLDDAAWLAVAEELQGLEDFEESRGLFGKLIKKFGRKAISYAVKKARGKN</sequence>
<dbReference type="EMBL" id="AM232699">
    <property type="protein sequence ID" value="CAJ81659.1"/>
    <property type="molecule type" value="mRNA"/>
</dbReference>
<dbReference type="SMR" id="Q1ELU0"/>
<dbReference type="ArachnoServer" id="AS000051">
    <property type="toxin name" value="M-zodatoxin-Lt2b"/>
</dbReference>
<dbReference type="GO" id="GO:0005576">
    <property type="term" value="C:extracellular region"/>
    <property type="evidence" value="ECO:0007669"/>
    <property type="project" value="UniProtKB-SubCell"/>
</dbReference>
<dbReference type="GO" id="GO:0090729">
    <property type="term" value="F:toxin activity"/>
    <property type="evidence" value="ECO:0007669"/>
    <property type="project" value="UniProtKB-KW"/>
</dbReference>
<dbReference type="GO" id="GO:0042742">
    <property type="term" value="P:defense response to bacterium"/>
    <property type="evidence" value="ECO:0007669"/>
    <property type="project" value="UniProtKB-KW"/>
</dbReference>
<dbReference type="GO" id="GO:0050832">
    <property type="term" value="P:defense response to fungus"/>
    <property type="evidence" value="ECO:0007669"/>
    <property type="project" value="UniProtKB-KW"/>
</dbReference>
<dbReference type="GO" id="GO:0031640">
    <property type="term" value="P:killing of cells of another organism"/>
    <property type="evidence" value="ECO:0007669"/>
    <property type="project" value="UniProtKB-KW"/>
</dbReference>
<dbReference type="InterPro" id="IPR018802">
    <property type="entry name" value="Latarcin_precursor"/>
</dbReference>
<dbReference type="Pfam" id="PF10279">
    <property type="entry name" value="Latarcin"/>
    <property type="match status" value="1"/>
</dbReference>
<proteinExistence type="evidence at protein level"/>
<comment type="function">
    <text evidence="2">Has antimicrobial activity against both Gram-positive and Gram-negative bacteria, and yeasts. Also has a strong hemolytic activity against rabbit erythrocytes. Causes paralysis, but is not lethal when injected into insect (M.domestica) larvae (By similarity).</text>
</comment>
<comment type="subcellular location">
    <subcellularLocation>
        <location evidence="5">Secreted</location>
    </subcellularLocation>
</comment>
<comment type="tissue specificity">
    <text evidence="9">Expressed by the venom gland.</text>
</comment>
<comment type="domain">
    <text evidence="3">The mature peptide (59-84) forms alpha-helices which probably disrupt target cell membranes.</text>
</comment>
<comment type="PTM">
    <text evidence="7">Cleavage of the propeptide depends on the processing quadruplet motif (XXXR, with at least one of X being E).</text>
</comment>
<comment type="mass spectrometry"/>
<comment type="similarity">
    <text evidence="8">Belongs to the cationic peptide 03 (latarcin) family. 02 subfamily.</text>
</comment>
<name>LAT2B_LACTA</name>
<reference key="1">
    <citation type="journal article" date="2006" name="J. Biol. Chem.">
        <title>Latarcins, antimicrobial and cytolytic peptides from the venom of the spider Lachesana tarabaevi (Zodariidae) that exemplify biomolecular diversity.</title>
        <authorList>
            <person name="Kozlov S.A."/>
            <person name="Vassilevski A.A."/>
            <person name="Feofanov A.V."/>
            <person name="Surovoy A.Y."/>
            <person name="Karpunin D.V."/>
            <person name="Grishin E.V."/>
        </authorList>
    </citation>
    <scope>NUCLEOTIDE SEQUENCE [MRNA]</scope>
    <source>
        <tissue>Venom gland</tissue>
    </source>
</reference>
<reference key="2">
    <citation type="journal article" date="2016" name="Biochem. J.">
        <title>Lachesana tarabaevi, an expert in membrane-active toxins.</title>
        <authorList>
            <person name="Kuzmenkov A.I."/>
            <person name="Sachkova M.Y."/>
            <person name="Kovalchuk S.I."/>
            <person name="Grishin E.V."/>
            <person name="Vassilevski A.A."/>
        </authorList>
    </citation>
    <scope>PROTEIN SEQUENCE OF 59-84</scope>
    <scope>SUBCELLULAR LOCATION</scope>
    <scope>PQM MOTIF</scope>
    <scope>MASS SPECTROMETRY</scope>
    <source>
        <tissue>Venom</tissue>
    </source>
</reference>
<organism>
    <name type="scientific">Lachesana tarabaevi</name>
    <name type="common">Spider</name>
    <dbReference type="NCBI Taxonomy" id="379576"/>
    <lineage>
        <taxon>Eukaryota</taxon>
        <taxon>Metazoa</taxon>
        <taxon>Ecdysozoa</taxon>
        <taxon>Arthropoda</taxon>
        <taxon>Chelicerata</taxon>
        <taxon>Arachnida</taxon>
        <taxon>Araneae</taxon>
        <taxon>Araneomorphae</taxon>
        <taxon>Entelegynae</taxon>
        <taxon>Entelegynae incertae sedis</taxon>
        <taxon>Zodariidae</taxon>
        <taxon>Lachesana</taxon>
    </lineage>
</organism>
<protein>
    <recommendedName>
        <fullName evidence="8">M-zodatoxin-Lt2b</fullName>
        <shortName evidence="8">M-ZDTX-Lt2b</shortName>
    </recommendedName>
    <alternativeName>
        <fullName evidence="6">Latarcin-2b</fullName>
        <shortName evidence="6">Ltc-2b</shortName>
    </alternativeName>
</protein>
<keyword id="KW-0044">Antibiotic</keyword>
<keyword id="KW-0929">Antimicrobial</keyword>
<keyword id="KW-0204">Cytolysis</keyword>
<keyword id="KW-0903">Direct protein sequencing</keyword>
<keyword id="KW-0295">Fungicide</keyword>
<keyword id="KW-0354">Hemolysis</keyword>
<keyword id="KW-0964">Secreted</keyword>
<keyword id="KW-0732">Signal</keyword>
<keyword id="KW-0800">Toxin</keyword>
<accession>Q1ELU0</accession>
<feature type="signal peptide" evidence="4">
    <location>
        <begin position="1"/>
        <end position="22"/>
    </location>
</feature>
<feature type="propeptide" id="PRO_0000249738" evidence="1">
    <location>
        <begin position="23"/>
        <end position="58"/>
    </location>
</feature>
<feature type="peptide" id="PRO_0000249739" description="M-zodatoxin-Lt2b">
    <location>
        <begin position="59"/>
        <end position="84"/>
    </location>
</feature>
<feature type="short sequence motif" description="Processing quadruplet motif" evidence="7">
    <location>
        <begin position="55"/>
        <end position="58"/>
    </location>
</feature>